<comment type="catalytic activity">
    <reaction evidence="1">
        <text>5-dehydro-4-deoxy-D-glucarate + H(+) = 2,5-dioxopentanoate + CO2 + H2O</text>
        <dbReference type="Rhea" id="RHEA:24608"/>
        <dbReference type="ChEBI" id="CHEBI:15377"/>
        <dbReference type="ChEBI" id="CHEBI:15378"/>
        <dbReference type="ChEBI" id="CHEBI:16526"/>
        <dbReference type="ChEBI" id="CHEBI:42819"/>
        <dbReference type="ChEBI" id="CHEBI:58136"/>
        <dbReference type="EC" id="4.2.1.41"/>
    </reaction>
</comment>
<comment type="pathway">
    <text evidence="1">Carbohydrate acid metabolism; D-glucarate degradation; 2,5-dioxopentanoate from D-glucarate: step 2/2.</text>
</comment>
<comment type="similarity">
    <text evidence="1">Belongs to the DapA family.</text>
</comment>
<sequence>MNPQELKSILSSGLLSFPVTDFNAQGDFHRAGYIKRLEWLAPYGASALFAAGGTGEFFSLAASEYSEIIKTAVDTCATSVPILAGVGGATRQAIEYAQEAERLGAKGLLLLPHYLTEASQDGVAAHVEAVCKSVKIGVVVYNRNVCRLTPTLLEQLAERCPNLIGYKDGLGDIELMVSIRRRLGDRFSYLGGLPTAEVYAAAYKALGVPVYSSAVFNFVPKLAMDFYHAIARDDHQAVGKYIDDFFLPYLEIRNRKAGYAVSIVKAGAKIAGYDAGPVRAPLTDLTSDECDMLAALMDKQGKQ</sequence>
<dbReference type="EC" id="4.2.1.41" evidence="1"/>
<dbReference type="EMBL" id="CP000075">
    <property type="protein sequence ID" value="AAY39257.1"/>
    <property type="molecule type" value="Genomic_DNA"/>
</dbReference>
<dbReference type="RefSeq" id="YP_237295.1">
    <property type="nucleotide sequence ID" value="NC_007005.1"/>
</dbReference>
<dbReference type="SMR" id="Q4ZNL5"/>
<dbReference type="STRING" id="205918.Psyr_4227"/>
<dbReference type="KEGG" id="psb:Psyr_4227"/>
<dbReference type="PATRIC" id="fig|205918.7.peg.4358"/>
<dbReference type="eggNOG" id="COG0329">
    <property type="taxonomic scope" value="Bacteria"/>
</dbReference>
<dbReference type="HOGENOM" id="CLU_049343_5_2_6"/>
<dbReference type="OrthoDB" id="8995637at2"/>
<dbReference type="UniPathway" id="UPA00564">
    <property type="reaction ID" value="UER00628"/>
</dbReference>
<dbReference type="Proteomes" id="UP000000426">
    <property type="component" value="Chromosome"/>
</dbReference>
<dbReference type="GO" id="GO:0008840">
    <property type="term" value="F:4-hydroxy-tetrahydrodipicolinate synthase activity"/>
    <property type="evidence" value="ECO:0007669"/>
    <property type="project" value="TreeGrafter"/>
</dbReference>
<dbReference type="GO" id="GO:0047448">
    <property type="term" value="F:5-dehydro-4-deoxyglucarate dehydratase activity"/>
    <property type="evidence" value="ECO:0007669"/>
    <property type="project" value="UniProtKB-UniRule"/>
</dbReference>
<dbReference type="GO" id="GO:0042838">
    <property type="term" value="P:D-glucarate catabolic process"/>
    <property type="evidence" value="ECO:0007669"/>
    <property type="project" value="UniProtKB-UniRule"/>
</dbReference>
<dbReference type="CDD" id="cd00951">
    <property type="entry name" value="KDGDH"/>
    <property type="match status" value="1"/>
</dbReference>
<dbReference type="Gene3D" id="3.20.20.70">
    <property type="entry name" value="Aldolase class I"/>
    <property type="match status" value="1"/>
</dbReference>
<dbReference type="HAMAP" id="MF_00694">
    <property type="entry name" value="KDGDH"/>
    <property type="match status" value="1"/>
</dbReference>
<dbReference type="InterPro" id="IPR013785">
    <property type="entry name" value="Aldolase_TIM"/>
</dbReference>
<dbReference type="InterPro" id="IPR002220">
    <property type="entry name" value="DapA-like"/>
</dbReference>
<dbReference type="InterPro" id="IPR017655">
    <property type="entry name" value="Dehydro-deoxyglucarate_dehyd"/>
</dbReference>
<dbReference type="NCBIfam" id="TIGR03249">
    <property type="entry name" value="KdgD"/>
    <property type="match status" value="1"/>
</dbReference>
<dbReference type="NCBIfam" id="NF002958">
    <property type="entry name" value="PRK03620.1"/>
    <property type="match status" value="1"/>
</dbReference>
<dbReference type="PANTHER" id="PTHR12128:SF19">
    <property type="entry name" value="5-DEHYDRO-4-DEOXYGLUCARATE DEHYDRATASE 2-RELATED"/>
    <property type="match status" value="1"/>
</dbReference>
<dbReference type="PANTHER" id="PTHR12128">
    <property type="entry name" value="DIHYDRODIPICOLINATE SYNTHASE"/>
    <property type="match status" value="1"/>
</dbReference>
<dbReference type="Pfam" id="PF00701">
    <property type="entry name" value="DHDPS"/>
    <property type="match status" value="1"/>
</dbReference>
<dbReference type="PIRSF" id="PIRSF001365">
    <property type="entry name" value="DHDPS"/>
    <property type="match status" value="1"/>
</dbReference>
<dbReference type="SMART" id="SM01130">
    <property type="entry name" value="DHDPS"/>
    <property type="match status" value="1"/>
</dbReference>
<dbReference type="SUPFAM" id="SSF51569">
    <property type="entry name" value="Aldolase"/>
    <property type="match status" value="1"/>
</dbReference>
<proteinExistence type="inferred from homology"/>
<reference key="1">
    <citation type="journal article" date="2005" name="Proc. Natl. Acad. Sci. U.S.A.">
        <title>Comparison of the complete genome sequences of Pseudomonas syringae pv. syringae B728a and pv. tomato DC3000.</title>
        <authorList>
            <person name="Feil H."/>
            <person name="Feil W.S."/>
            <person name="Chain P."/>
            <person name="Larimer F."/>
            <person name="Dibartolo G."/>
            <person name="Copeland A."/>
            <person name="Lykidis A."/>
            <person name="Trong S."/>
            <person name="Nolan M."/>
            <person name="Goltsman E."/>
            <person name="Thiel J."/>
            <person name="Malfatti S."/>
            <person name="Loper J.E."/>
            <person name="Lapidus A."/>
            <person name="Detter J.C."/>
            <person name="Land M."/>
            <person name="Richardson P.M."/>
            <person name="Kyrpides N.C."/>
            <person name="Ivanova N."/>
            <person name="Lindow S.E."/>
        </authorList>
    </citation>
    <scope>NUCLEOTIDE SEQUENCE [LARGE SCALE GENOMIC DNA]</scope>
    <source>
        <strain>B728a</strain>
    </source>
</reference>
<feature type="chain" id="PRO_1000045411" description="Probable 5-dehydro-4-deoxyglucarate dehydratase">
    <location>
        <begin position="1"/>
        <end position="303"/>
    </location>
</feature>
<keyword id="KW-0456">Lyase</keyword>
<protein>
    <recommendedName>
        <fullName evidence="1">Probable 5-dehydro-4-deoxyglucarate dehydratase</fullName>
        <ecNumber evidence="1">4.2.1.41</ecNumber>
    </recommendedName>
    <alternativeName>
        <fullName evidence="1">5-keto-4-deoxy-glucarate dehydratase</fullName>
        <shortName evidence="1">KDGDH</shortName>
    </alternativeName>
</protein>
<accession>Q4ZNL5</accession>
<evidence type="ECO:0000255" key="1">
    <source>
        <dbReference type="HAMAP-Rule" id="MF_00694"/>
    </source>
</evidence>
<name>KDGD_PSEU2</name>
<gene>
    <name type="ordered locus">Psyr_4227</name>
</gene>
<organism>
    <name type="scientific">Pseudomonas syringae pv. syringae (strain B728a)</name>
    <dbReference type="NCBI Taxonomy" id="205918"/>
    <lineage>
        <taxon>Bacteria</taxon>
        <taxon>Pseudomonadati</taxon>
        <taxon>Pseudomonadota</taxon>
        <taxon>Gammaproteobacteria</taxon>
        <taxon>Pseudomonadales</taxon>
        <taxon>Pseudomonadaceae</taxon>
        <taxon>Pseudomonas</taxon>
        <taxon>Pseudomonas syringae</taxon>
    </lineage>
</organism>